<proteinExistence type="evidence at protein level"/>
<reference key="1">
    <citation type="journal article" date="2008" name="Toxicon">
        <title>Tityus serrulatus venom peptidomics: assessing venom peptide diversity.</title>
        <authorList>
            <person name="Rates B."/>
            <person name="Ferraz K.K."/>
            <person name="Borges M.H."/>
            <person name="Richardson M."/>
            <person name="De Lima M.E."/>
            <person name="Pimenta A.M."/>
        </authorList>
    </citation>
    <scope>PROTEIN SEQUENCE</scope>
    <scope>SUBCELLULAR LOCATION</scope>
    <source>
        <tissue>Venom</tissue>
    </source>
</reference>
<protein>
    <recommendedName>
        <fullName evidence="2">Venom peptide 6</fullName>
    </recommendedName>
</protein>
<keyword id="KW-0903">Direct protein sequencing</keyword>
<keyword id="KW-0964">Secreted</keyword>
<comment type="subcellular location">
    <subcellularLocation>
        <location evidence="1">Secreted</location>
    </subcellularLocation>
</comment>
<comment type="tissue specificity">
    <text evidence="3">Expressed by the venom gland.</text>
</comment>
<comment type="similarity">
    <text evidence="3">Belongs to the non-disulfide-bridged peptide (NDBP) superfamily. Short antimicrobial peptide (group 4) family.</text>
</comment>
<name>NDB4U_TITSE</name>
<dbReference type="GO" id="GO:0005576">
    <property type="term" value="C:extracellular region"/>
    <property type="evidence" value="ECO:0007669"/>
    <property type="project" value="UniProtKB-SubCell"/>
</dbReference>
<accession>P86827</accession>
<feature type="peptide" id="PRO_0000401155" description="Venom peptide 6" evidence="1">
    <location>
        <begin position="1"/>
        <end position="7"/>
    </location>
</feature>
<organism>
    <name type="scientific">Tityus serrulatus</name>
    <name type="common">Brazilian scorpion</name>
    <dbReference type="NCBI Taxonomy" id="6887"/>
    <lineage>
        <taxon>Eukaryota</taxon>
        <taxon>Metazoa</taxon>
        <taxon>Ecdysozoa</taxon>
        <taxon>Arthropoda</taxon>
        <taxon>Chelicerata</taxon>
        <taxon>Arachnida</taxon>
        <taxon>Scorpiones</taxon>
        <taxon>Buthida</taxon>
        <taxon>Buthoidea</taxon>
        <taxon>Buthidae</taxon>
        <taxon>Tityus</taxon>
    </lineage>
</organism>
<sequence>FGVLNFF</sequence>
<evidence type="ECO:0000269" key="1">
    <source>
    </source>
</evidence>
<evidence type="ECO:0000303" key="2">
    <source>
    </source>
</evidence>
<evidence type="ECO:0000305" key="3"/>